<dbReference type="EC" id="4.2.1.47"/>
<dbReference type="EMBL" id="U81805">
    <property type="protein sequence ID" value="AAB51505.1"/>
    <property type="molecule type" value="mRNA"/>
</dbReference>
<dbReference type="EMBL" id="AL132980">
    <property type="protein sequence ID" value="CAB62638.1"/>
    <property type="molecule type" value="Genomic_DNA"/>
</dbReference>
<dbReference type="EMBL" id="CP002686">
    <property type="protein sequence ID" value="AEE78758.1"/>
    <property type="molecule type" value="Genomic_DNA"/>
</dbReference>
<dbReference type="EMBL" id="BT025710">
    <property type="protein sequence ID" value="ABF82613.1"/>
    <property type="molecule type" value="mRNA"/>
</dbReference>
<dbReference type="EMBL" id="AY084574">
    <property type="protein sequence ID" value="AAM61140.1"/>
    <property type="molecule type" value="mRNA"/>
</dbReference>
<dbReference type="PIR" id="T45747">
    <property type="entry name" value="T45747"/>
</dbReference>
<dbReference type="RefSeq" id="NP_190685.2">
    <property type="nucleotide sequence ID" value="NM_114976.4"/>
</dbReference>
<dbReference type="PDB" id="1N7G">
    <property type="method" value="X-ray"/>
    <property type="resolution" value="2.20 A"/>
    <property type="chains" value="A/B/C/D=1-373"/>
</dbReference>
<dbReference type="PDB" id="1N7H">
    <property type="method" value="X-ray"/>
    <property type="resolution" value="1.80 A"/>
    <property type="chains" value="A/B=1-373"/>
</dbReference>
<dbReference type="PDBsum" id="1N7G"/>
<dbReference type="PDBsum" id="1N7H"/>
<dbReference type="SMR" id="P93031"/>
<dbReference type="BioGRID" id="9598">
    <property type="interactions" value="4"/>
</dbReference>
<dbReference type="FunCoup" id="P93031">
    <property type="interactions" value="2758"/>
</dbReference>
<dbReference type="STRING" id="3702.P93031"/>
<dbReference type="iPTMnet" id="P93031"/>
<dbReference type="MetOSite" id="P93031"/>
<dbReference type="PaxDb" id="3702-AT3G51160.1"/>
<dbReference type="ProteomicsDB" id="247371"/>
<dbReference type="EnsemblPlants" id="AT3G51160.1">
    <property type="protein sequence ID" value="AT3G51160.1"/>
    <property type="gene ID" value="AT3G51160"/>
</dbReference>
<dbReference type="GeneID" id="824280"/>
<dbReference type="Gramene" id="AT3G51160.1">
    <property type="protein sequence ID" value="AT3G51160.1"/>
    <property type="gene ID" value="AT3G51160"/>
</dbReference>
<dbReference type="KEGG" id="ath:AT3G51160"/>
<dbReference type="Araport" id="AT3G51160"/>
<dbReference type="TAIR" id="AT3G51160">
    <property type="gene designation" value="MUR1"/>
</dbReference>
<dbReference type="eggNOG" id="KOG1372">
    <property type="taxonomic scope" value="Eukaryota"/>
</dbReference>
<dbReference type="HOGENOM" id="CLU_007383_14_0_1"/>
<dbReference type="InParanoid" id="P93031"/>
<dbReference type="OMA" id="AFRDWSH"/>
<dbReference type="OrthoDB" id="10253554at2759"/>
<dbReference type="PhylomeDB" id="P93031"/>
<dbReference type="BioCyc" id="ARA:AT3G51160-MONOMER"/>
<dbReference type="BioCyc" id="MetaCyc:AT3G51160-MONOMER"/>
<dbReference type="BRENDA" id="4.2.1.47">
    <property type="organism ID" value="399"/>
</dbReference>
<dbReference type="UniPathway" id="UPA00128">
    <property type="reaction ID" value="UER00190"/>
</dbReference>
<dbReference type="EvolutionaryTrace" id="P93031"/>
<dbReference type="PRO" id="PR:P93031"/>
<dbReference type="Proteomes" id="UP000006548">
    <property type="component" value="Chromosome 3"/>
</dbReference>
<dbReference type="ExpressionAtlas" id="P93031">
    <property type="expression patterns" value="baseline and differential"/>
</dbReference>
<dbReference type="GO" id="GO:0005829">
    <property type="term" value="C:cytosol"/>
    <property type="evidence" value="ECO:0007005"/>
    <property type="project" value="TAIR"/>
</dbReference>
<dbReference type="GO" id="GO:0008446">
    <property type="term" value="F:GDP-mannose 4,6-dehydratase activity"/>
    <property type="evidence" value="ECO:0000314"/>
    <property type="project" value="TAIR"/>
</dbReference>
<dbReference type="GO" id="GO:0005525">
    <property type="term" value="F:GTP binding"/>
    <property type="evidence" value="ECO:0007669"/>
    <property type="project" value="UniProtKB-KW"/>
</dbReference>
<dbReference type="GO" id="GO:0042351">
    <property type="term" value="P:'de novo' GDP-L-fucose biosynthetic process"/>
    <property type="evidence" value="ECO:0000315"/>
    <property type="project" value="TAIR"/>
</dbReference>
<dbReference type="GO" id="GO:0009826">
    <property type="term" value="P:unidimensional cell growth"/>
    <property type="evidence" value="ECO:0000315"/>
    <property type="project" value="TAIR"/>
</dbReference>
<dbReference type="CDD" id="cd05260">
    <property type="entry name" value="GDP_MD_SDR_e"/>
    <property type="match status" value="1"/>
</dbReference>
<dbReference type="FunFam" id="3.40.50.720:FF:000102">
    <property type="entry name" value="GDP-mannose 4,6-dehydratase"/>
    <property type="match status" value="1"/>
</dbReference>
<dbReference type="Gene3D" id="3.40.50.720">
    <property type="entry name" value="NAD(P)-binding Rossmann-like Domain"/>
    <property type="match status" value="1"/>
</dbReference>
<dbReference type="Gene3D" id="3.90.25.10">
    <property type="entry name" value="UDP-galactose 4-epimerase, domain 1"/>
    <property type="match status" value="1"/>
</dbReference>
<dbReference type="HAMAP" id="MF_00955">
    <property type="entry name" value="GDP_Man_dehydratase"/>
    <property type="match status" value="1"/>
</dbReference>
<dbReference type="InterPro" id="IPR006368">
    <property type="entry name" value="GDP_Man_deHydtase"/>
</dbReference>
<dbReference type="InterPro" id="IPR016040">
    <property type="entry name" value="NAD(P)-bd_dom"/>
</dbReference>
<dbReference type="InterPro" id="IPR036291">
    <property type="entry name" value="NAD(P)-bd_dom_sf"/>
</dbReference>
<dbReference type="NCBIfam" id="TIGR01472">
    <property type="entry name" value="gmd"/>
    <property type="match status" value="1"/>
</dbReference>
<dbReference type="PANTHER" id="PTHR43715:SF1">
    <property type="entry name" value="GDP-MANNOSE 4,6 DEHYDRATASE"/>
    <property type="match status" value="1"/>
</dbReference>
<dbReference type="PANTHER" id="PTHR43715">
    <property type="entry name" value="GDP-MANNOSE 4,6-DEHYDRATASE"/>
    <property type="match status" value="1"/>
</dbReference>
<dbReference type="Pfam" id="PF16363">
    <property type="entry name" value="GDP_Man_Dehyd"/>
    <property type="match status" value="1"/>
</dbReference>
<dbReference type="SUPFAM" id="SSF51735">
    <property type="entry name" value="NAD(P)-binding Rossmann-fold domains"/>
    <property type="match status" value="1"/>
</dbReference>
<evidence type="ECO:0000256" key="1">
    <source>
        <dbReference type="SAM" id="MobiDB-lite"/>
    </source>
</evidence>
<evidence type="ECO:0000269" key="2">
    <source>
    </source>
</evidence>
<evidence type="ECO:0000269" key="3">
    <source>
    </source>
</evidence>
<evidence type="ECO:0000269" key="4">
    <source>
    </source>
</evidence>
<evidence type="ECO:0000305" key="5"/>
<evidence type="ECO:0000305" key="6">
    <source>
    </source>
</evidence>
<evidence type="ECO:0007829" key="7">
    <source>
        <dbReference type="PDB" id="1N7H"/>
    </source>
</evidence>
<protein>
    <recommendedName>
        <fullName>GDP-mannose 4,6 dehydratase 2</fullName>
        <ecNumber>4.2.1.47</ecNumber>
    </recommendedName>
    <alternativeName>
        <fullName>GDP-D-mannose dehydratase 2</fullName>
        <shortName>GMD 2</shortName>
    </alternativeName>
</protein>
<keyword id="KW-0002">3D-structure</keyword>
<keyword id="KW-0342">GTP-binding</keyword>
<keyword id="KW-0456">Lyase</keyword>
<keyword id="KW-0521">NADP</keyword>
<keyword id="KW-0547">Nucleotide-binding</keyword>
<keyword id="KW-1185">Reference proteome</keyword>
<feature type="chain" id="PRO_0000201711" description="GDP-mannose 4,6 dehydratase 2">
    <location>
        <begin position="1"/>
        <end position="373"/>
    </location>
</feature>
<feature type="region of interest" description="Disordered" evidence="1">
    <location>
        <begin position="1"/>
        <end position="21"/>
    </location>
</feature>
<feature type="compositionally biased region" description="Polar residues" evidence="1">
    <location>
        <begin position="1"/>
        <end position="15"/>
    </location>
</feature>
<feature type="active site" evidence="6">
    <location>
        <position position="162"/>
    </location>
</feature>
<feature type="active site" description="Nucleophile" evidence="6">
    <location>
        <position position="164"/>
    </location>
</feature>
<feature type="active site" description="Nucleophile" evidence="6">
    <location>
        <position position="185"/>
    </location>
</feature>
<feature type="binding site" evidence="2">
    <location>
        <begin position="35"/>
        <end position="40"/>
    </location>
    <ligand>
        <name>NADP(+)</name>
        <dbReference type="ChEBI" id="CHEBI:58349"/>
    </ligand>
</feature>
<feature type="binding site" evidence="2">
    <location>
        <position position="60"/>
    </location>
    <ligand>
        <name>NADP(+)</name>
        <dbReference type="ChEBI" id="CHEBI:58349"/>
    </ligand>
</feature>
<feature type="binding site" evidence="2">
    <location>
        <begin position="91"/>
        <end position="92"/>
    </location>
    <ligand>
        <name>NADP(+)</name>
        <dbReference type="ChEBI" id="CHEBI:58349"/>
    </ligand>
</feature>
<feature type="binding site" evidence="2">
    <location>
        <begin position="113"/>
        <end position="117"/>
    </location>
    <ligand>
        <name>NADP(+)</name>
        <dbReference type="ChEBI" id="CHEBI:58349"/>
    </ligand>
</feature>
<feature type="binding site" evidence="6">
    <location>
        <position position="117"/>
    </location>
    <ligand>
        <name>substrate</name>
    </ligand>
</feature>
<feature type="binding site" evidence="2">
    <location>
        <position position="128"/>
    </location>
    <ligand>
        <name>NADP(+)</name>
        <dbReference type="ChEBI" id="CHEBI:58349"/>
    </ligand>
</feature>
<feature type="binding site" evidence="6">
    <location>
        <position position="162"/>
    </location>
    <ligand>
        <name>substrate</name>
    </ligand>
</feature>
<feature type="binding site" evidence="6">
    <location>
        <position position="185"/>
    </location>
    <ligand>
        <name>substrate</name>
    </ligand>
</feature>
<feature type="binding site" evidence="2">
    <location>
        <position position="189"/>
    </location>
    <ligand>
        <name>NADP(+)</name>
        <dbReference type="ChEBI" id="CHEBI:58349"/>
    </ligand>
</feature>
<feature type="binding site" evidence="6">
    <location>
        <position position="214"/>
    </location>
    <ligand>
        <name>substrate</name>
    </ligand>
</feature>
<feature type="binding site" evidence="2">
    <location>
        <position position="215"/>
    </location>
    <ligand>
        <name>NADP(+)</name>
        <dbReference type="ChEBI" id="CHEBI:58349"/>
    </ligand>
</feature>
<feature type="binding site" evidence="6">
    <location>
        <begin position="220"/>
        <end position="228"/>
    </location>
    <ligand>
        <name>substrate</name>
    </ligand>
</feature>
<feature type="binding site" evidence="2">
    <location>
        <position position="220"/>
    </location>
    <ligand>
        <name>NADP(+)</name>
        <dbReference type="ChEBI" id="CHEBI:58349"/>
    </ligand>
</feature>
<feature type="binding site" evidence="6">
    <location>
        <position position="247"/>
    </location>
    <ligand>
        <name>substrate</name>
    </ligand>
</feature>
<feature type="binding site" evidence="6">
    <location>
        <position position="253"/>
    </location>
    <ligand>
        <name>substrate</name>
    </ligand>
</feature>
<feature type="binding site" evidence="6">
    <location>
        <begin position="314"/>
        <end position="317"/>
    </location>
    <ligand>
        <name>substrate</name>
    </ligand>
</feature>
<feature type="mutagenesis site" description="In mur1-2; strong reduction in L-fucose in the cell walls." evidence="4">
    <original>P</original>
    <variation>L</variation>
    <location>
        <position position="107"/>
    </location>
</feature>
<feature type="mutagenesis site" description="In mur1-7; strong reduction in L-fucose in the cell walls." evidence="4">
    <original>R</original>
    <variation>C</variation>
    <location>
        <position position="139"/>
    </location>
</feature>
<feature type="mutagenesis site" description="In mur1-5; strong reduction in L-fucose in the cell walls." evidence="4">
    <original>R</original>
    <variation>C</variation>
    <location>
        <position position="153"/>
    </location>
</feature>
<feature type="mutagenesis site" description="In mur1-1; strong reduction in L-fucose in the cell walls." evidence="4">
    <original>S</original>
    <variation>F</variation>
    <location>
        <position position="162"/>
    </location>
</feature>
<feature type="mutagenesis site" description="In mur1-3; strong reduction in L-fucose in the cell walls." evidence="4">
    <original>A</original>
    <variation>V</variation>
    <location>
        <position position="191"/>
    </location>
</feature>
<feature type="mutagenesis site" description="In mur1-6; strong reduction in L-fucose in the cell walls." evidence="4">
    <original>A</original>
    <variation>V</variation>
    <location>
        <position position="202"/>
    </location>
</feature>
<feature type="mutagenesis site" description="In mur1-4; strong reduction in L-fucose in the cell walls." evidence="4">
    <original>G</original>
    <variation>Q</variation>
    <location>
        <position position="210"/>
    </location>
</feature>
<feature type="sequence conflict" description="In Ref. 5; AAM61140." evidence="5" ref="5">
    <original>V</original>
    <variation>F</variation>
    <location>
        <position position="55"/>
    </location>
</feature>
<feature type="sequence conflict" description="In Ref. 2; CAB62638." evidence="5" ref="2">
    <original>FHP</original>
    <variation>IHL</variation>
    <location>
        <begin position="179"/>
        <end position="181"/>
    </location>
</feature>
<feature type="strand" evidence="7">
    <location>
        <begin position="30"/>
        <end position="34"/>
    </location>
</feature>
<feature type="turn" evidence="7">
    <location>
        <begin position="35"/>
        <end position="37"/>
    </location>
</feature>
<feature type="helix" evidence="7">
    <location>
        <begin position="39"/>
        <end position="50"/>
    </location>
</feature>
<feature type="strand" evidence="7">
    <location>
        <begin position="54"/>
        <end position="59"/>
    </location>
</feature>
<feature type="turn" evidence="7">
    <location>
        <begin position="68"/>
        <end position="73"/>
    </location>
</feature>
<feature type="strand" evidence="7">
    <location>
        <begin position="85"/>
        <end position="89"/>
    </location>
</feature>
<feature type="helix" evidence="7">
    <location>
        <begin position="95"/>
        <end position="105"/>
    </location>
</feature>
<feature type="strand" evidence="7">
    <location>
        <begin position="108"/>
        <end position="112"/>
    </location>
</feature>
<feature type="helix" evidence="7">
    <location>
        <begin position="119"/>
        <end position="124"/>
    </location>
</feature>
<feature type="helix" evidence="7">
    <location>
        <begin position="126"/>
        <end position="133"/>
    </location>
</feature>
<feature type="helix" evidence="7">
    <location>
        <begin position="135"/>
        <end position="151"/>
    </location>
</feature>
<feature type="strand" evidence="7">
    <location>
        <begin position="156"/>
        <end position="162"/>
    </location>
</feature>
<feature type="helix" evidence="7">
    <location>
        <begin position="163"/>
        <end position="166"/>
    </location>
</feature>
<feature type="strand" evidence="7">
    <location>
        <begin position="171"/>
        <end position="173"/>
    </location>
</feature>
<feature type="helix" evidence="7">
    <location>
        <begin position="184"/>
        <end position="203"/>
    </location>
</feature>
<feature type="strand" evidence="7">
    <location>
        <begin position="206"/>
        <end position="212"/>
    </location>
</feature>
<feature type="helix" evidence="7">
    <location>
        <begin position="225"/>
        <end position="237"/>
    </location>
</feature>
<feature type="strand" evidence="7">
    <location>
        <begin position="244"/>
        <end position="247"/>
    </location>
</feature>
<feature type="strand" evidence="7">
    <location>
        <begin position="252"/>
        <end position="254"/>
    </location>
</feature>
<feature type="helix" evidence="7">
    <location>
        <begin position="258"/>
        <end position="269"/>
    </location>
</feature>
<feature type="strand" evidence="7">
    <location>
        <begin position="271"/>
        <end position="273"/>
    </location>
</feature>
<feature type="strand" evidence="7">
    <location>
        <begin position="276"/>
        <end position="279"/>
    </location>
</feature>
<feature type="strand" evidence="7">
    <location>
        <begin position="284"/>
        <end position="286"/>
    </location>
</feature>
<feature type="helix" evidence="7">
    <location>
        <begin position="287"/>
        <end position="297"/>
    </location>
</feature>
<feature type="helix" evidence="7">
    <location>
        <begin position="302"/>
        <end position="304"/>
    </location>
</feature>
<feature type="strand" evidence="7">
    <location>
        <begin position="306"/>
        <end position="308"/>
    </location>
</feature>
<feature type="helix" evidence="7">
    <location>
        <begin position="310"/>
        <end position="312"/>
    </location>
</feature>
<feature type="helix" evidence="7">
    <location>
        <begin position="326"/>
        <end position="332"/>
    </location>
</feature>
<feature type="helix" evidence="7">
    <location>
        <begin position="340"/>
        <end position="363"/>
    </location>
</feature>
<organism>
    <name type="scientific">Arabidopsis thaliana</name>
    <name type="common">Mouse-ear cress</name>
    <dbReference type="NCBI Taxonomy" id="3702"/>
    <lineage>
        <taxon>Eukaryota</taxon>
        <taxon>Viridiplantae</taxon>
        <taxon>Streptophyta</taxon>
        <taxon>Embryophyta</taxon>
        <taxon>Tracheophyta</taxon>
        <taxon>Spermatophyta</taxon>
        <taxon>Magnoliopsida</taxon>
        <taxon>eudicotyledons</taxon>
        <taxon>Gunneridae</taxon>
        <taxon>Pentapetalae</taxon>
        <taxon>rosids</taxon>
        <taxon>malvids</taxon>
        <taxon>Brassicales</taxon>
        <taxon>Brassicaceae</taxon>
        <taxon>Camelineae</taxon>
        <taxon>Arabidopsis</taxon>
    </lineage>
</organism>
<name>GMD2_ARATH</name>
<proteinExistence type="evidence at protein level"/>
<comment type="function">
    <text evidence="3 4">Catalyzes the conversion of GDP-D-mannose to GDP-4-dehydro-6-deoxy-D-mannose.</text>
</comment>
<comment type="catalytic activity">
    <reaction evidence="4">
        <text>GDP-alpha-D-mannose = GDP-4-dehydro-alpha-D-rhamnose + H2O</text>
        <dbReference type="Rhea" id="RHEA:23820"/>
        <dbReference type="ChEBI" id="CHEBI:15377"/>
        <dbReference type="ChEBI" id="CHEBI:57527"/>
        <dbReference type="ChEBI" id="CHEBI:57964"/>
        <dbReference type="EC" id="4.2.1.47"/>
    </reaction>
</comment>
<comment type="cofactor">
    <cofactor>
        <name>NADP(+)</name>
        <dbReference type="ChEBI" id="CHEBI:58349"/>
    </cofactor>
</comment>
<comment type="pathway">
    <text>Nucleotide-sugar biosynthesis; GDP-L-fucose biosynthesis via de novo pathway; GDP-L-fucose from GDP-alpha-D-mannose: step 1/2.</text>
</comment>
<comment type="subunit">
    <text evidence="2">Homotetramer. Binds to GER1.</text>
</comment>
<comment type="tissue specificity">
    <text evidence="3">Expressed in roots, flowers, siliques, leaves and stems. Not expressed in the root meristem and the proximal part of the elongation zone, or in emerging lateral roots. Expressed in trichomes and guard cells, and in pollen just before anthesis.</text>
</comment>
<comment type="similarity">
    <text evidence="5">Belongs to the NAD(P)-dependent epimerase/dehydratase family. GDP-mannose 4,6-dehydratase subfamily.</text>
</comment>
<sequence>MASENNGSRSDSESITAPKADSTVVEPRKIALITGITGQDGSYLTEFLLGKGYEVHGLIRRSSNFNTQRINHIYIDPHNVNKALMKLHYADLTDASSLRRWIDVIKPDEVYNLAAQSHVAVSFEIPDYTADVVATGALRLLEAVRSHTIDSGRTVKYYQAGSSEMFGSTPPPQSETTPFHPRSPYAASKCAAHWYTVNYREAYGLFACNGILFNHESPRRGENFVTRKITRALGRIKVGLQTKLFLGNLQASRDWGFAGDYVEAMWLMLQQEKPDDYVVATEEGHTVEEFLDVSFGYLGLNWKDYVEIDQRYFRPAEVDNLQGDASKAKEVLGWKPQVGFEKLVKMMVDEDLELAKREKVLVDAGYMDAKQQP</sequence>
<gene>
    <name type="primary">MUR1</name>
    <name type="synonym">GMD2</name>
    <name type="ordered locus">At3g51160</name>
    <name type="ORF">F24M12.200</name>
</gene>
<reference key="1">
    <citation type="journal article" date="1997" name="Proc. Natl. Acad. Sci. U.S.A.">
        <title>The MUR1 gene of Arabidopsis thaliana encodes an isoform of GDP-D-mannose-4,6-dehydratase, catalyzing the first step in the de novo synthesis of GDP-L-fucose.</title>
        <authorList>
            <person name="Bonin C.P."/>
            <person name="Potter I."/>
            <person name="Vanzin G.F."/>
            <person name="Reiter W.-D."/>
        </authorList>
    </citation>
    <scope>NUCLEOTIDE SEQUENCE [MRNA]</scope>
    <scope>FUNCTION</scope>
    <scope>CATALYTIC ACTIVITY</scope>
    <scope>MUTANTS MUR1-1; MUR1-2; MUR1-3; MUR1-4; MUR1-5; MUR1-9 AND MUR1-7</scope>
    <source>
        <strain>cv. Columbia</strain>
    </source>
</reference>
<reference key="2">
    <citation type="journal article" date="2000" name="Nature">
        <title>Sequence and analysis of chromosome 3 of the plant Arabidopsis thaliana.</title>
        <authorList>
            <person name="Salanoubat M."/>
            <person name="Lemcke K."/>
            <person name="Rieger M."/>
            <person name="Ansorge W."/>
            <person name="Unseld M."/>
            <person name="Fartmann B."/>
            <person name="Valle G."/>
            <person name="Bloecker H."/>
            <person name="Perez-Alonso M."/>
            <person name="Obermaier B."/>
            <person name="Delseny M."/>
            <person name="Boutry M."/>
            <person name="Grivell L.A."/>
            <person name="Mache R."/>
            <person name="Puigdomenech P."/>
            <person name="De Simone V."/>
            <person name="Choisne N."/>
            <person name="Artiguenave F."/>
            <person name="Robert C."/>
            <person name="Brottier P."/>
            <person name="Wincker P."/>
            <person name="Cattolico L."/>
            <person name="Weissenbach J."/>
            <person name="Saurin W."/>
            <person name="Quetier F."/>
            <person name="Schaefer M."/>
            <person name="Mueller-Auer S."/>
            <person name="Gabel C."/>
            <person name="Fuchs M."/>
            <person name="Benes V."/>
            <person name="Wurmbach E."/>
            <person name="Drzonek H."/>
            <person name="Erfle H."/>
            <person name="Jordan N."/>
            <person name="Bangert S."/>
            <person name="Wiedelmann R."/>
            <person name="Kranz H."/>
            <person name="Voss H."/>
            <person name="Holland R."/>
            <person name="Brandt P."/>
            <person name="Nyakatura G."/>
            <person name="Vezzi A."/>
            <person name="D'Angelo M."/>
            <person name="Pallavicini A."/>
            <person name="Toppo S."/>
            <person name="Simionati B."/>
            <person name="Conrad A."/>
            <person name="Hornischer K."/>
            <person name="Kauer G."/>
            <person name="Loehnert T.-H."/>
            <person name="Nordsiek G."/>
            <person name="Reichelt J."/>
            <person name="Scharfe M."/>
            <person name="Schoen O."/>
            <person name="Bargues M."/>
            <person name="Terol J."/>
            <person name="Climent J."/>
            <person name="Navarro P."/>
            <person name="Collado C."/>
            <person name="Perez-Perez A."/>
            <person name="Ottenwaelder B."/>
            <person name="Duchemin D."/>
            <person name="Cooke R."/>
            <person name="Laudie M."/>
            <person name="Berger-Llauro C."/>
            <person name="Purnelle B."/>
            <person name="Masuy D."/>
            <person name="de Haan M."/>
            <person name="Maarse A.C."/>
            <person name="Alcaraz J.-P."/>
            <person name="Cottet A."/>
            <person name="Casacuberta E."/>
            <person name="Monfort A."/>
            <person name="Argiriou A."/>
            <person name="Flores M."/>
            <person name="Liguori R."/>
            <person name="Vitale D."/>
            <person name="Mannhaupt G."/>
            <person name="Haase D."/>
            <person name="Schoof H."/>
            <person name="Rudd S."/>
            <person name="Zaccaria P."/>
            <person name="Mewes H.-W."/>
            <person name="Mayer K.F.X."/>
            <person name="Kaul S."/>
            <person name="Town C.D."/>
            <person name="Koo H.L."/>
            <person name="Tallon L.J."/>
            <person name="Jenkins J."/>
            <person name="Rooney T."/>
            <person name="Rizzo M."/>
            <person name="Walts A."/>
            <person name="Utterback T."/>
            <person name="Fujii C.Y."/>
            <person name="Shea T.P."/>
            <person name="Creasy T.H."/>
            <person name="Haas B."/>
            <person name="Maiti R."/>
            <person name="Wu D."/>
            <person name="Peterson J."/>
            <person name="Van Aken S."/>
            <person name="Pai G."/>
            <person name="Militscher J."/>
            <person name="Sellers P."/>
            <person name="Gill J.E."/>
            <person name="Feldblyum T.V."/>
            <person name="Preuss D."/>
            <person name="Lin X."/>
            <person name="Nierman W.C."/>
            <person name="Salzberg S.L."/>
            <person name="White O."/>
            <person name="Venter J.C."/>
            <person name="Fraser C.M."/>
            <person name="Kaneko T."/>
            <person name="Nakamura Y."/>
            <person name="Sato S."/>
            <person name="Kato T."/>
            <person name="Asamizu E."/>
            <person name="Sasamoto S."/>
            <person name="Kimura T."/>
            <person name="Idesawa K."/>
            <person name="Kawashima K."/>
            <person name="Kishida Y."/>
            <person name="Kiyokawa C."/>
            <person name="Kohara M."/>
            <person name="Matsumoto M."/>
            <person name="Matsuno A."/>
            <person name="Muraki A."/>
            <person name="Nakayama S."/>
            <person name="Nakazaki N."/>
            <person name="Shinpo S."/>
            <person name="Takeuchi C."/>
            <person name="Wada T."/>
            <person name="Watanabe A."/>
            <person name="Yamada M."/>
            <person name="Yasuda M."/>
            <person name="Tabata S."/>
        </authorList>
    </citation>
    <scope>NUCLEOTIDE SEQUENCE [LARGE SCALE GENOMIC DNA]</scope>
    <source>
        <strain>cv. Columbia</strain>
    </source>
</reference>
<reference key="3">
    <citation type="journal article" date="2017" name="Plant J.">
        <title>Araport11: a complete reannotation of the Arabidopsis thaliana reference genome.</title>
        <authorList>
            <person name="Cheng C.Y."/>
            <person name="Krishnakumar V."/>
            <person name="Chan A.P."/>
            <person name="Thibaud-Nissen F."/>
            <person name="Schobel S."/>
            <person name="Town C.D."/>
        </authorList>
    </citation>
    <scope>GENOME REANNOTATION</scope>
    <source>
        <strain>cv. Columbia</strain>
    </source>
</reference>
<reference key="4">
    <citation type="submission" date="2006-06" db="EMBL/GenBank/DDBJ databases">
        <title>Arabidopsis ORF clones.</title>
        <authorList>
            <person name="Quinitio C."/>
            <person name="Chen H."/>
            <person name="Kim C.J."/>
            <person name="Shinn P."/>
            <person name="Ecker J.R."/>
        </authorList>
    </citation>
    <scope>NUCLEOTIDE SEQUENCE [LARGE SCALE MRNA]</scope>
    <source>
        <strain>cv. Columbia</strain>
    </source>
</reference>
<reference key="5">
    <citation type="submission" date="2002-03" db="EMBL/GenBank/DDBJ databases">
        <title>Full-length cDNA from Arabidopsis thaliana.</title>
        <authorList>
            <person name="Brover V.V."/>
            <person name="Troukhan M.E."/>
            <person name="Alexandrov N.A."/>
            <person name="Lu Y.-P."/>
            <person name="Flavell R.B."/>
            <person name="Feldmann K.A."/>
        </authorList>
    </citation>
    <scope>NUCLEOTIDE SEQUENCE [LARGE SCALE MRNA]</scope>
</reference>
<reference key="6">
    <citation type="journal article" date="2003" name="Glycobiology">
        <title>Interaction of GDP-4-keto-6-deoxymannose-3,5-epimerase-4-reductase with GDP-mannose-4,6-dehydratase stabilizes the enzyme activity for formation of GDP-fucose from GDP-mannose.</title>
        <authorList>
            <person name="Nakayama K."/>
            <person name="Maeda Y."/>
            <person name="Jigami Y."/>
        </authorList>
    </citation>
    <scope>INTERACTION WITH GER1</scope>
</reference>
<reference key="7">
    <citation type="journal article" date="2003" name="Plant Physiol.">
        <title>The GMD1 and GMD2 genes of Arabidopsis encode isoforms of GDP-D-mannose 4,6-dehydratase with cell type-specific expression patterns.</title>
        <authorList>
            <person name="Bonin C.P."/>
            <person name="Freshour G."/>
            <person name="Hahn M.G."/>
            <person name="Vanzin G.F."/>
            <person name="Reiter W.D."/>
        </authorList>
    </citation>
    <scope>FUNCTION</scope>
    <scope>TISSUE SPECIFICITY</scope>
</reference>
<reference key="8">
    <citation type="journal article" date="2008" name="J. Proteome Res.">
        <title>Site-specific phosphorylation profiling of Arabidopsis proteins by mass spectrometry and peptide chip analysis.</title>
        <authorList>
            <person name="de la Fuente van Bentem S."/>
            <person name="Anrather D."/>
            <person name="Dohnal I."/>
            <person name="Roitinger E."/>
            <person name="Csaszar E."/>
            <person name="Joore J."/>
            <person name="Buijnink J."/>
            <person name="Carreri A."/>
            <person name="Forzani C."/>
            <person name="Lorkovic Z.J."/>
            <person name="Barta A."/>
            <person name="Lecourieux D."/>
            <person name="Verhounig A."/>
            <person name="Jonak C."/>
            <person name="Hirt H."/>
        </authorList>
    </citation>
    <scope>IDENTIFICATION BY MASS SPECTROMETRY [LARGE SCALE ANALYSIS]</scope>
    <source>
        <tissue>Root</tissue>
    </source>
</reference>
<reference key="9">
    <citation type="journal article" date="2009" name="Plant Physiol.">
        <title>Large-scale Arabidopsis phosphoproteome profiling reveals novel chloroplast kinase substrates and phosphorylation networks.</title>
        <authorList>
            <person name="Reiland S."/>
            <person name="Messerli G."/>
            <person name="Baerenfaller K."/>
            <person name="Gerrits B."/>
            <person name="Endler A."/>
            <person name="Grossmann J."/>
            <person name="Gruissem W."/>
            <person name="Baginsky S."/>
        </authorList>
    </citation>
    <scope>IDENTIFICATION BY MASS SPECTROMETRY [LARGE SCALE ANALYSIS]</scope>
</reference>
<reference key="10">
    <citation type="journal article" date="2002" name="Biochemistry">
        <title>Structure of the MUR1 GDP-mannose 4,6-dehydratase from Arabidopsis thaliana: implications for ligand binding and specificity.</title>
        <authorList>
            <person name="Mulichak A.M."/>
            <person name="Bonin C.P."/>
            <person name="Reiter W.-D."/>
            <person name="Garavito R.M."/>
        </authorList>
    </citation>
    <scope>X-RAY CRYSTALLOGRAPHY (1.8 ANGSTROMS) OF 28-368 IN COMPLEX WITH NADP; GDP AND GDP-D-RHAMNOSE</scope>
    <scope>ACTIVE SITE</scope>
</reference>
<accession>P93031</accession>
<accession>Q1ECM4</accession>
<accession>Q8LFY4</accession>
<accession>Q9SD30</accession>